<dbReference type="EC" id="3.6.1.27" evidence="1"/>
<dbReference type="EMBL" id="AP009389">
    <property type="protein sequence ID" value="BAF59473.1"/>
    <property type="molecule type" value="Genomic_DNA"/>
</dbReference>
<dbReference type="SMR" id="A5D2Q9"/>
<dbReference type="STRING" id="370438.PTH_1292"/>
<dbReference type="KEGG" id="pth:PTH_1292"/>
<dbReference type="eggNOG" id="COG1968">
    <property type="taxonomic scope" value="Bacteria"/>
</dbReference>
<dbReference type="HOGENOM" id="CLU_060296_1_0_9"/>
<dbReference type="Proteomes" id="UP000006556">
    <property type="component" value="Chromosome"/>
</dbReference>
<dbReference type="GO" id="GO:0005886">
    <property type="term" value="C:plasma membrane"/>
    <property type="evidence" value="ECO:0007669"/>
    <property type="project" value="UniProtKB-SubCell"/>
</dbReference>
<dbReference type="GO" id="GO:0050380">
    <property type="term" value="F:undecaprenyl-diphosphatase activity"/>
    <property type="evidence" value="ECO:0007669"/>
    <property type="project" value="UniProtKB-UniRule"/>
</dbReference>
<dbReference type="GO" id="GO:0071555">
    <property type="term" value="P:cell wall organization"/>
    <property type="evidence" value="ECO:0007669"/>
    <property type="project" value="UniProtKB-KW"/>
</dbReference>
<dbReference type="GO" id="GO:0009252">
    <property type="term" value="P:peptidoglycan biosynthetic process"/>
    <property type="evidence" value="ECO:0007669"/>
    <property type="project" value="UniProtKB-KW"/>
</dbReference>
<dbReference type="GO" id="GO:0008360">
    <property type="term" value="P:regulation of cell shape"/>
    <property type="evidence" value="ECO:0007669"/>
    <property type="project" value="UniProtKB-KW"/>
</dbReference>
<dbReference type="GO" id="GO:0046677">
    <property type="term" value="P:response to antibiotic"/>
    <property type="evidence" value="ECO:0007669"/>
    <property type="project" value="UniProtKB-UniRule"/>
</dbReference>
<dbReference type="HAMAP" id="MF_01006">
    <property type="entry name" value="Undec_diphosphatase"/>
    <property type="match status" value="1"/>
</dbReference>
<dbReference type="InterPro" id="IPR003824">
    <property type="entry name" value="UppP"/>
</dbReference>
<dbReference type="PANTHER" id="PTHR30622">
    <property type="entry name" value="UNDECAPRENYL-DIPHOSPHATASE"/>
    <property type="match status" value="1"/>
</dbReference>
<dbReference type="PANTHER" id="PTHR30622:SF4">
    <property type="entry name" value="UNDECAPRENYL-DIPHOSPHATASE"/>
    <property type="match status" value="1"/>
</dbReference>
<dbReference type="Pfam" id="PF02673">
    <property type="entry name" value="BacA"/>
    <property type="match status" value="1"/>
</dbReference>
<keyword id="KW-0046">Antibiotic resistance</keyword>
<keyword id="KW-1003">Cell membrane</keyword>
<keyword id="KW-0133">Cell shape</keyword>
<keyword id="KW-0961">Cell wall biogenesis/degradation</keyword>
<keyword id="KW-0378">Hydrolase</keyword>
<keyword id="KW-0472">Membrane</keyword>
<keyword id="KW-0573">Peptidoglycan synthesis</keyword>
<keyword id="KW-1185">Reference proteome</keyword>
<keyword id="KW-0812">Transmembrane</keyword>
<keyword id="KW-1133">Transmembrane helix</keyword>
<protein>
    <recommendedName>
        <fullName evidence="1">Undecaprenyl-diphosphatase</fullName>
        <ecNumber evidence="1">3.6.1.27</ecNumber>
    </recommendedName>
    <alternativeName>
        <fullName evidence="1">Bacitracin resistance protein</fullName>
    </alternativeName>
    <alternativeName>
        <fullName evidence="1">Undecaprenyl pyrophosphate phosphatase</fullName>
    </alternativeName>
</protein>
<feature type="chain" id="PRO_1000083983" description="Undecaprenyl-diphosphatase">
    <location>
        <begin position="1"/>
        <end position="264"/>
    </location>
</feature>
<feature type="transmembrane region" description="Helical" evidence="1">
    <location>
        <begin position="1"/>
        <end position="21"/>
    </location>
</feature>
<feature type="transmembrane region" description="Helical" evidence="1">
    <location>
        <begin position="40"/>
        <end position="60"/>
    </location>
</feature>
<feature type="transmembrane region" description="Helical" evidence="1">
    <location>
        <begin position="81"/>
        <end position="101"/>
    </location>
</feature>
<feature type="transmembrane region" description="Helical" evidence="1">
    <location>
        <begin position="109"/>
        <end position="129"/>
    </location>
</feature>
<feature type="transmembrane region" description="Helical" evidence="1">
    <location>
        <begin position="140"/>
        <end position="160"/>
    </location>
</feature>
<feature type="transmembrane region" description="Helical" evidence="1">
    <location>
        <begin position="183"/>
        <end position="203"/>
    </location>
</feature>
<feature type="transmembrane region" description="Helical" evidence="1">
    <location>
        <begin position="211"/>
        <end position="231"/>
    </location>
</feature>
<feature type="transmembrane region" description="Helical" evidence="1">
    <location>
        <begin position="239"/>
        <end position="259"/>
    </location>
</feature>
<comment type="function">
    <text evidence="1">Catalyzes the dephosphorylation of undecaprenyl diphosphate (UPP). Confers resistance to bacitracin.</text>
</comment>
<comment type="catalytic activity">
    <reaction evidence="1">
        <text>di-trans,octa-cis-undecaprenyl diphosphate + H2O = di-trans,octa-cis-undecaprenyl phosphate + phosphate + H(+)</text>
        <dbReference type="Rhea" id="RHEA:28094"/>
        <dbReference type="ChEBI" id="CHEBI:15377"/>
        <dbReference type="ChEBI" id="CHEBI:15378"/>
        <dbReference type="ChEBI" id="CHEBI:43474"/>
        <dbReference type="ChEBI" id="CHEBI:58405"/>
        <dbReference type="ChEBI" id="CHEBI:60392"/>
        <dbReference type="EC" id="3.6.1.27"/>
    </reaction>
</comment>
<comment type="subcellular location">
    <subcellularLocation>
        <location evidence="1">Cell membrane</location>
        <topology evidence="1">Multi-pass membrane protein</topology>
    </subcellularLocation>
</comment>
<comment type="miscellaneous">
    <text>Bacitracin is thought to be involved in the inhibition of peptidoglycan synthesis by sequestering undecaprenyl diphosphate, thereby reducing the pool of lipid carrier available.</text>
</comment>
<comment type="similarity">
    <text evidence="1">Belongs to the UppP family.</text>
</comment>
<evidence type="ECO:0000255" key="1">
    <source>
        <dbReference type="HAMAP-Rule" id="MF_01006"/>
    </source>
</evidence>
<accession>A5D2Q9</accession>
<proteinExistence type="inferred from homology"/>
<name>UPPP_PELTS</name>
<gene>
    <name evidence="1" type="primary">uppP</name>
    <name type="ordered locus">PTH_1292</name>
</gene>
<sequence>MTVFQALVLGIIQGLGEFLPISSSAHLVLVPWLFGWQYAGLTFDVALHLGTLISIAAFFWKEWIVLIGSALRRRGTHEARMFWYLVLATVPGAVMGYLLEEQAETVFRTPLLIGIMLIVMGIFLYWADAKKPAVKGMREISMADSLLIGLSQAFAIIPGVSRSGVTMTAGRALGLSRETAARFSFLLSTPIIVGAGLFKLKDITPGDVNTAFITGVASSALVGFISISFLLKYLTGRSFALFVWYRLVAGLAVIVLAAARQFGF</sequence>
<reference key="1">
    <citation type="journal article" date="2008" name="Genome Res.">
        <title>The genome of Pelotomaculum thermopropionicum reveals niche-associated evolution in anaerobic microbiota.</title>
        <authorList>
            <person name="Kosaka T."/>
            <person name="Kato S."/>
            <person name="Shimoyama T."/>
            <person name="Ishii S."/>
            <person name="Abe T."/>
            <person name="Watanabe K."/>
        </authorList>
    </citation>
    <scope>NUCLEOTIDE SEQUENCE [LARGE SCALE GENOMIC DNA]</scope>
    <source>
        <strain>DSM 13744 / JCM 10971 / SI</strain>
    </source>
</reference>
<organism>
    <name type="scientific">Pelotomaculum thermopropionicum (strain DSM 13744 / JCM 10971 / SI)</name>
    <dbReference type="NCBI Taxonomy" id="370438"/>
    <lineage>
        <taxon>Bacteria</taxon>
        <taxon>Bacillati</taxon>
        <taxon>Bacillota</taxon>
        <taxon>Clostridia</taxon>
        <taxon>Eubacteriales</taxon>
        <taxon>Desulfotomaculaceae</taxon>
        <taxon>Pelotomaculum</taxon>
    </lineage>
</organism>